<proteinExistence type="inferred from homology"/>
<sequence>MDTRSEVLLRQAELFQGSLLLAGLAADDLLGRLPNARGWSWHAGDQAALEARFPGRSHFGVDAPAQSFDSAVLFLPKSKDLTDYLLNALASRLAGRELYLVGEKRSGVESAAKQLNPFGKPRKLDSARHCQLWQVTVANAPEPLTLQSLAQEYELPLAEGPLKVISLPGVFSHGRLDRGTALLLEHLDHLPAGHLLDFGCGAGVLGATVKRRYPDSRVTLLDVDAFAAASSRLTLAANGLEAEVLTGDGIDAAPMGLNGILTNPPFHTGVHTDYQATENLLRKAAKHLQKGGELRVVANSFLRYQPLIEEHLGPCAIKAEGQGFRIYRAKRG</sequence>
<evidence type="ECO:0000255" key="1">
    <source>
        <dbReference type="HAMAP-Rule" id="MF_01862"/>
    </source>
</evidence>
<name>RSMC_PSEF5</name>
<keyword id="KW-0963">Cytoplasm</keyword>
<keyword id="KW-0489">Methyltransferase</keyword>
<keyword id="KW-0698">rRNA processing</keyword>
<keyword id="KW-0949">S-adenosyl-L-methionine</keyword>
<keyword id="KW-0808">Transferase</keyword>
<feature type="chain" id="PRO_0000369739" description="Ribosomal RNA small subunit methyltransferase C">
    <location>
        <begin position="1"/>
        <end position="332"/>
    </location>
</feature>
<comment type="function">
    <text evidence="1">Specifically methylates the guanine in position 1207 of 16S rRNA in the 30S particle.</text>
</comment>
<comment type="catalytic activity">
    <reaction evidence="1">
        <text>guanosine(1207) in 16S rRNA + S-adenosyl-L-methionine = N(2)-methylguanosine(1207) in 16S rRNA + S-adenosyl-L-homocysteine + H(+)</text>
        <dbReference type="Rhea" id="RHEA:42736"/>
        <dbReference type="Rhea" id="RHEA-COMP:10213"/>
        <dbReference type="Rhea" id="RHEA-COMP:10214"/>
        <dbReference type="ChEBI" id="CHEBI:15378"/>
        <dbReference type="ChEBI" id="CHEBI:57856"/>
        <dbReference type="ChEBI" id="CHEBI:59789"/>
        <dbReference type="ChEBI" id="CHEBI:74269"/>
        <dbReference type="ChEBI" id="CHEBI:74481"/>
        <dbReference type="EC" id="2.1.1.172"/>
    </reaction>
</comment>
<comment type="subunit">
    <text evidence="1">Monomer.</text>
</comment>
<comment type="subcellular location">
    <subcellularLocation>
        <location evidence="1">Cytoplasm</location>
    </subcellularLocation>
</comment>
<comment type="similarity">
    <text evidence="1">Belongs to the methyltransferase superfamily. RsmC family.</text>
</comment>
<gene>
    <name evidence="1" type="primary">rsmC</name>
    <name type="ordered locus">PFL_5122</name>
</gene>
<reference key="1">
    <citation type="journal article" date="2005" name="Nat. Biotechnol.">
        <title>Complete genome sequence of the plant commensal Pseudomonas fluorescens Pf-5.</title>
        <authorList>
            <person name="Paulsen I.T."/>
            <person name="Press C.M."/>
            <person name="Ravel J."/>
            <person name="Kobayashi D.Y."/>
            <person name="Myers G.S.A."/>
            <person name="Mavrodi D.V."/>
            <person name="DeBoy R.T."/>
            <person name="Seshadri R."/>
            <person name="Ren Q."/>
            <person name="Madupu R."/>
            <person name="Dodson R.J."/>
            <person name="Durkin A.S."/>
            <person name="Brinkac L.M."/>
            <person name="Daugherty S.C."/>
            <person name="Sullivan S.A."/>
            <person name="Rosovitz M.J."/>
            <person name="Gwinn M.L."/>
            <person name="Zhou L."/>
            <person name="Schneider D.J."/>
            <person name="Cartinhour S.W."/>
            <person name="Nelson W.C."/>
            <person name="Weidman J."/>
            <person name="Watkins K."/>
            <person name="Tran K."/>
            <person name="Khouri H."/>
            <person name="Pierson E.A."/>
            <person name="Pierson L.S. III"/>
            <person name="Thomashow L.S."/>
            <person name="Loper J.E."/>
        </authorList>
    </citation>
    <scope>NUCLEOTIDE SEQUENCE [LARGE SCALE GENOMIC DNA]</scope>
    <source>
        <strain>ATCC BAA-477 / NRRL B-23932 / Pf-5</strain>
    </source>
</reference>
<organism>
    <name type="scientific">Pseudomonas fluorescens (strain ATCC BAA-477 / NRRL B-23932 / Pf-5)</name>
    <dbReference type="NCBI Taxonomy" id="220664"/>
    <lineage>
        <taxon>Bacteria</taxon>
        <taxon>Pseudomonadati</taxon>
        <taxon>Pseudomonadota</taxon>
        <taxon>Gammaproteobacteria</taxon>
        <taxon>Pseudomonadales</taxon>
        <taxon>Pseudomonadaceae</taxon>
        <taxon>Pseudomonas</taxon>
    </lineage>
</organism>
<dbReference type="EC" id="2.1.1.172" evidence="1"/>
<dbReference type="EMBL" id="CP000076">
    <property type="protein sequence ID" value="AAY94344.1"/>
    <property type="molecule type" value="Genomic_DNA"/>
</dbReference>
<dbReference type="RefSeq" id="WP_011063369.1">
    <property type="nucleotide sequence ID" value="NC_004129.6"/>
</dbReference>
<dbReference type="SMR" id="Q4K6D2"/>
<dbReference type="STRING" id="220664.PFL_5122"/>
<dbReference type="KEGG" id="pfl:PFL_5122"/>
<dbReference type="PATRIC" id="fig|220664.5.peg.5233"/>
<dbReference type="eggNOG" id="COG2813">
    <property type="taxonomic scope" value="Bacteria"/>
</dbReference>
<dbReference type="HOGENOM" id="CLU_049581_0_0_6"/>
<dbReference type="Proteomes" id="UP000008540">
    <property type="component" value="Chromosome"/>
</dbReference>
<dbReference type="GO" id="GO:0005737">
    <property type="term" value="C:cytoplasm"/>
    <property type="evidence" value="ECO:0007669"/>
    <property type="project" value="UniProtKB-SubCell"/>
</dbReference>
<dbReference type="GO" id="GO:0052914">
    <property type="term" value="F:16S rRNA (guanine(1207)-N(2))-methyltransferase activity"/>
    <property type="evidence" value="ECO:0007669"/>
    <property type="project" value="UniProtKB-EC"/>
</dbReference>
<dbReference type="CDD" id="cd02440">
    <property type="entry name" value="AdoMet_MTases"/>
    <property type="match status" value="1"/>
</dbReference>
<dbReference type="Gene3D" id="3.40.50.150">
    <property type="entry name" value="Vaccinia Virus protein VP39"/>
    <property type="match status" value="2"/>
</dbReference>
<dbReference type="HAMAP" id="MF_01862">
    <property type="entry name" value="16SrRNA_methyltr_C"/>
    <property type="match status" value="1"/>
</dbReference>
<dbReference type="InterPro" id="IPR013675">
    <property type="entry name" value="Mtase_sm_N"/>
</dbReference>
<dbReference type="InterPro" id="IPR023543">
    <property type="entry name" value="rRNA_ssu_MeTfrase_C"/>
</dbReference>
<dbReference type="InterPro" id="IPR046977">
    <property type="entry name" value="RsmC/RlmG"/>
</dbReference>
<dbReference type="InterPro" id="IPR029063">
    <property type="entry name" value="SAM-dependent_MTases_sf"/>
</dbReference>
<dbReference type="InterPro" id="IPR007848">
    <property type="entry name" value="Small_mtfrase_dom"/>
</dbReference>
<dbReference type="PANTHER" id="PTHR47816">
    <property type="entry name" value="RIBOSOMAL RNA SMALL SUBUNIT METHYLTRANSFERASE C"/>
    <property type="match status" value="1"/>
</dbReference>
<dbReference type="PANTHER" id="PTHR47816:SF4">
    <property type="entry name" value="RIBOSOMAL RNA SMALL SUBUNIT METHYLTRANSFERASE C"/>
    <property type="match status" value="1"/>
</dbReference>
<dbReference type="Pfam" id="PF05175">
    <property type="entry name" value="MTS"/>
    <property type="match status" value="1"/>
</dbReference>
<dbReference type="Pfam" id="PF08468">
    <property type="entry name" value="MTS_N"/>
    <property type="match status" value="1"/>
</dbReference>
<dbReference type="SUPFAM" id="SSF53335">
    <property type="entry name" value="S-adenosyl-L-methionine-dependent methyltransferases"/>
    <property type="match status" value="1"/>
</dbReference>
<protein>
    <recommendedName>
        <fullName evidence="1">Ribosomal RNA small subunit methyltransferase C</fullName>
        <ecNumber evidence="1">2.1.1.172</ecNumber>
    </recommendedName>
    <alternativeName>
        <fullName evidence="1">16S rRNA m2G1207 methyltransferase</fullName>
    </alternativeName>
    <alternativeName>
        <fullName evidence="1">rRNA (guanine-N(2)-)-methyltransferase RsmC</fullName>
    </alternativeName>
</protein>
<accession>Q4K6D2</accession>